<keyword id="KW-0031">Aminopeptidase</keyword>
<keyword id="KW-0378">Hydrolase</keyword>
<keyword id="KW-0479">Metal-binding</keyword>
<keyword id="KW-0645">Protease</keyword>
<keyword id="KW-1185">Reference proteome</keyword>
<sequence length="301" mass="33252">MTEDELNKLLLAGKIAAKARDEVSLDVKASAKVLDICEEVESIIIENKAFPSFPCNISINSEAAHYSPTINDEKRIPEGAVVKLDLGAHIDGFISDTAITISLDSRYQRLLDASKTALEAAITNFKAGLSIGEIGRVIEKVIRAQGYKPIRNLGGHLIRRYELHAGVFIPNVYERGLGVIQSDSVYAIEPFATDGGGEVVEGKSITIYSLKNPNIKGLSSRENELIDFIYTRFNYLPFSERWLKEFSTNVDELRNNIKNLVKKGALRGYPILIEIKKGVVSQFEHTVIVKGDSIIVSTKSL</sequence>
<name>MAP2_SACS2</name>
<accession>P95963</accession>
<gene>
    <name evidence="1" type="primary">map</name>
    <name type="ordered locus">SSO0098</name>
    <name type="ORF">C04024</name>
    <name type="ORF">C05_012</name>
</gene>
<feature type="chain" id="PRO_0000148981" description="Methionine aminopeptidase">
    <location>
        <begin position="1"/>
        <end position="301"/>
    </location>
</feature>
<feature type="binding site" evidence="1">
    <location>
        <position position="65"/>
    </location>
    <ligand>
        <name>substrate</name>
    </ligand>
</feature>
<feature type="binding site" evidence="1">
    <location>
        <position position="85"/>
    </location>
    <ligand>
        <name>a divalent metal cation</name>
        <dbReference type="ChEBI" id="CHEBI:60240"/>
        <label>1</label>
    </ligand>
</feature>
<feature type="binding site" evidence="1">
    <location>
        <position position="96"/>
    </location>
    <ligand>
        <name>a divalent metal cation</name>
        <dbReference type="ChEBI" id="CHEBI:60240"/>
        <label>1</label>
    </ligand>
</feature>
<feature type="binding site" evidence="1">
    <location>
        <position position="96"/>
    </location>
    <ligand>
        <name>a divalent metal cation</name>
        <dbReference type="ChEBI" id="CHEBI:60240"/>
        <label>2</label>
        <note>catalytic</note>
    </ligand>
</feature>
<feature type="binding site" evidence="1">
    <location>
        <position position="156"/>
    </location>
    <ligand>
        <name>a divalent metal cation</name>
        <dbReference type="ChEBI" id="CHEBI:60240"/>
        <label>2</label>
        <note>catalytic</note>
    </ligand>
</feature>
<feature type="binding site" evidence="1">
    <location>
        <position position="164"/>
    </location>
    <ligand>
        <name>substrate</name>
    </ligand>
</feature>
<feature type="binding site" evidence="1">
    <location>
        <position position="189"/>
    </location>
    <ligand>
        <name>a divalent metal cation</name>
        <dbReference type="ChEBI" id="CHEBI:60240"/>
        <label>2</label>
        <note>catalytic</note>
    </ligand>
</feature>
<feature type="binding site" evidence="1">
    <location>
        <position position="284"/>
    </location>
    <ligand>
        <name>a divalent metal cation</name>
        <dbReference type="ChEBI" id="CHEBI:60240"/>
        <label>1</label>
    </ligand>
</feature>
<feature type="binding site" evidence="1">
    <location>
        <position position="284"/>
    </location>
    <ligand>
        <name>a divalent metal cation</name>
        <dbReference type="ChEBI" id="CHEBI:60240"/>
        <label>2</label>
        <note>catalytic</note>
    </ligand>
</feature>
<protein>
    <recommendedName>
        <fullName evidence="1">Methionine aminopeptidase</fullName>
        <shortName evidence="1">MAP</shortName>
        <shortName evidence="1">MetAP</shortName>
        <ecNumber evidence="1">3.4.11.18</ecNumber>
    </recommendedName>
    <alternativeName>
        <fullName evidence="1">Peptidase M</fullName>
    </alternativeName>
</protein>
<reference key="1">
    <citation type="journal article" date="1996" name="Mol. Microbiol.">
        <title>Organizational characteristics and information content of an archaeal genome: 156 kb of sequence from Sulfolobus solfataricus P2.</title>
        <authorList>
            <person name="Sensen C.W."/>
            <person name="Klenk H.-P."/>
            <person name="Singh R.K."/>
            <person name="Allard G."/>
            <person name="Chan C.C.-Y."/>
            <person name="Liu Q.Y."/>
            <person name="Penny S.L."/>
            <person name="Young F."/>
            <person name="Schenk M.E."/>
            <person name="Gaasterland T."/>
            <person name="Doolittle W.F."/>
            <person name="Ragan M.A."/>
            <person name="Charlebois R.L."/>
        </authorList>
    </citation>
    <scope>NUCLEOTIDE SEQUENCE [GENOMIC DNA]</scope>
    <source>
        <strain>ATCC 35092 / DSM 1617 / JCM 11322 / P2</strain>
    </source>
</reference>
<reference key="2">
    <citation type="journal article" date="2001" name="Proc. Natl. Acad. Sci. U.S.A.">
        <title>The complete genome of the crenarchaeon Sulfolobus solfataricus P2.</title>
        <authorList>
            <person name="She Q."/>
            <person name="Singh R.K."/>
            <person name="Confalonieri F."/>
            <person name="Zivanovic Y."/>
            <person name="Allard G."/>
            <person name="Awayez M.J."/>
            <person name="Chan-Weiher C.C.-Y."/>
            <person name="Clausen I.G."/>
            <person name="Curtis B.A."/>
            <person name="De Moors A."/>
            <person name="Erauso G."/>
            <person name="Fletcher C."/>
            <person name="Gordon P.M.K."/>
            <person name="Heikamp-de Jong I."/>
            <person name="Jeffries A.C."/>
            <person name="Kozera C.J."/>
            <person name="Medina N."/>
            <person name="Peng X."/>
            <person name="Thi-Ngoc H.P."/>
            <person name="Redder P."/>
            <person name="Schenk M.E."/>
            <person name="Theriault C."/>
            <person name="Tolstrup N."/>
            <person name="Charlebois R.L."/>
            <person name="Doolittle W.F."/>
            <person name="Duguet M."/>
            <person name="Gaasterland T."/>
            <person name="Garrett R.A."/>
            <person name="Ragan M.A."/>
            <person name="Sensen C.W."/>
            <person name="Van der Oost J."/>
        </authorList>
    </citation>
    <scope>NUCLEOTIDE SEQUENCE [LARGE SCALE GENOMIC DNA]</scope>
    <source>
        <strain>ATCC 35092 / DSM 1617 / JCM 11322 / P2</strain>
    </source>
</reference>
<dbReference type="EC" id="3.4.11.18" evidence="1"/>
<dbReference type="EMBL" id="Y08257">
    <property type="protein sequence ID" value="CAA69553.1"/>
    <property type="molecule type" value="Genomic_DNA"/>
</dbReference>
<dbReference type="EMBL" id="AE006641">
    <property type="protein sequence ID" value="AAK40454.1"/>
    <property type="molecule type" value="Genomic_DNA"/>
</dbReference>
<dbReference type="PIR" id="S75391">
    <property type="entry name" value="S75391"/>
</dbReference>
<dbReference type="RefSeq" id="WP_009988912.1">
    <property type="nucleotide sequence ID" value="NC_002754.1"/>
</dbReference>
<dbReference type="SMR" id="P95963"/>
<dbReference type="FunCoup" id="P95963">
    <property type="interactions" value="287"/>
</dbReference>
<dbReference type="STRING" id="273057.SSO0098"/>
<dbReference type="PaxDb" id="273057-SSO0098"/>
<dbReference type="EnsemblBacteria" id="AAK40454">
    <property type="protein sequence ID" value="AAK40454"/>
    <property type="gene ID" value="SSO0098"/>
</dbReference>
<dbReference type="GeneID" id="44129058"/>
<dbReference type="KEGG" id="sso:SSO0098"/>
<dbReference type="PATRIC" id="fig|273057.12.peg.95"/>
<dbReference type="eggNOG" id="arCOG01001">
    <property type="taxonomic scope" value="Archaea"/>
</dbReference>
<dbReference type="HOGENOM" id="CLU_015857_7_0_2"/>
<dbReference type="InParanoid" id="P95963"/>
<dbReference type="PhylomeDB" id="P95963"/>
<dbReference type="Proteomes" id="UP000001974">
    <property type="component" value="Chromosome"/>
</dbReference>
<dbReference type="GO" id="GO:0005737">
    <property type="term" value="C:cytoplasm"/>
    <property type="evidence" value="ECO:0000318"/>
    <property type="project" value="GO_Central"/>
</dbReference>
<dbReference type="GO" id="GO:0004177">
    <property type="term" value="F:aminopeptidase activity"/>
    <property type="evidence" value="ECO:0000318"/>
    <property type="project" value="GO_Central"/>
</dbReference>
<dbReference type="GO" id="GO:0004239">
    <property type="term" value="F:initiator methionyl aminopeptidase activity"/>
    <property type="evidence" value="ECO:0007669"/>
    <property type="project" value="UniProtKB-UniRule"/>
</dbReference>
<dbReference type="GO" id="GO:0046872">
    <property type="term" value="F:metal ion binding"/>
    <property type="evidence" value="ECO:0007669"/>
    <property type="project" value="UniProtKB-UniRule"/>
</dbReference>
<dbReference type="GO" id="GO:0070006">
    <property type="term" value="F:metalloaminopeptidase activity"/>
    <property type="evidence" value="ECO:0007669"/>
    <property type="project" value="UniProtKB-UniRule"/>
</dbReference>
<dbReference type="GO" id="GO:0008235">
    <property type="term" value="F:metalloexopeptidase activity"/>
    <property type="evidence" value="ECO:0000318"/>
    <property type="project" value="GO_Central"/>
</dbReference>
<dbReference type="GO" id="GO:0006508">
    <property type="term" value="P:proteolysis"/>
    <property type="evidence" value="ECO:0007669"/>
    <property type="project" value="UniProtKB-KW"/>
</dbReference>
<dbReference type="CDD" id="cd01088">
    <property type="entry name" value="MetAP2"/>
    <property type="match status" value="1"/>
</dbReference>
<dbReference type="Gene3D" id="3.90.230.10">
    <property type="entry name" value="Creatinase/methionine aminopeptidase superfamily"/>
    <property type="match status" value="1"/>
</dbReference>
<dbReference type="Gene3D" id="1.10.10.10">
    <property type="entry name" value="Winged helix-like DNA-binding domain superfamily/Winged helix DNA-binding domain"/>
    <property type="match status" value="1"/>
</dbReference>
<dbReference type="HAMAP" id="MF_01975">
    <property type="entry name" value="MetAP_2_arc"/>
    <property type="match status" value="1"/>
</dbReference>
<dbReference type="InterPro" id="IPR036005">
    <property type="entry name" value="Creatinase/aminopeptidase-like"/>
</dbReference>
<dbReference type="InterPro" id="IPR050247">
    <property type="entry name" value="Met_Aminopeptidase_Type2"/>
</dbReference>
<dbReference type="InterPro" id="IPR028595">
    <property type="entry name" value="MetAP_archaeal"/>
</dbReference>
<dbReference type="InterPro" id="IPR000994">
    <property type="entry name" value="Pept_M24"/>
</dbReference>
<dbReference type="InterPro" id="IPR001714">
    <property type="entry name" value="Pept_M24_MAP"/>
</dbReference>
<dbReference type="InterPro" id="IPR002468">
    <property type="entry name" value="Pept_M24A_MAP2"/>
</dbReference>
<dbReference type="InterPro" id="IPR018349">
    <property type="entry name" value="Pept_M24A_MAP2_BS"/>
</dbReference>
<dbReference type="InterPro" id="IPR036388">
    <property type="entry name" value="WH-like_DNA-bd_sf"/>
</dbReference>
<dbReference type="InterPro" id="IPR036390">
    <property type="entry name" value="WH_DNA-bd_sf"/>
</dbReference>
<dbReference type="NCBIfam" id="TIGR00501">
    <property type="entry name" value="met_pdase_II"/>
    <property type="match status" value="1"/>
</dbReference>
<dbReference type="PANTHER" id="PTHR45777">
    <property type="entry name" value="METHIONINE AMINOPEPTIDASE 2"/>
    <property type="match status" value="1"/>
</dbReference>
<dbReference type="PANTHER" id="PTHR45777:SF2">
    <property type="entry name" value="METHIONINE AMINOPEPTIDASE 2"/>
    <property type="match status" value="1"/>
</dbReference>
<dbReference type="Pfam" id="PF00557">
    <property type="entry name" value="Peptidase_M24"/>
    <property type="match status" value="1"/>
</dbReference>
<dbReference type="PRINTS" id="PR00599">
    <property type="entry name" value="MAPEPTIDASE"/>
</dbReference>
<dbReference type="SUPFAM" id="SSF55920">
    <property type="entry name" value="Creatinase/aminopeptidase"/>
    <property type="match status" value="1"/>
</dbReference>
<dbReference type="SUPFAM" id="SSF46785">
    <property type="entry name" value="Winged helix' DNA-binding domain"/>
    <property type="match status" value="1"/>
</dbReference>
<dbReference type="PROSITE" id="PS01202">
    <property type="entry name" value="MAP_2"/>
    <property type="match status" value="1"/>
</dbReference>
<evidence type="ECO:0000255" key="1">
    <source>
        <dbReference type="HAMAP-Rule" id="MF_01975"/>
    </source>
</evidence>
<organism>
    <name type="scientific">Saccharolobus solfataricus (strain ATCC 35092 / DSM 1617 / JCM 11322 / P2)</name>
    <name type="common">Sulfolobus solfataricus</name>
    <dbReference type="NCBI Taxonomy" id="273057"/>
    <lineage>
        <taxon>Archaea</taxon>
        <taxon>Thermoproteota</taxon>
        <taxon>Thermoprotei</taxon>
        <taxon>Sulfolobales</taxon>
        <taxon>Sulfolobaceae</taxon>
        <taxon>Saccharolobus</taxon>
    </lineage>
</organism>
<comment type="function">
    <text evidence="1">Removes the N-terminal methionine from nascent proteins. The N-terminal methionine is often cleaved when the second residue in the primary sequence is small and uncharged (Met-Ala-, Cys, Gly, Pro, Ser, Thr, or Val).</text>
</comment>
<comment type="catalytic activity">
    <reaction evidence="1">
        <text>Release of N-terminal amino acids, preferentially methionine, from peptides and arylamides.</text>
        <dbReference type="EC" id="3.4.11.18"/>
    </reaction>
</comment>
<comment type="cofactor">
    <cofactor evidence="1">
        <name>Co(2+)</name>
        <dbReference type="ChEBI" id="CHEBI:48828"/>
    </cofactor>
    <cofactor evidence="1">
        <name>Zn(2+)</name>
        <dbReference type="ChEBI" id="CHEBI:29105"/>
    </cofactor>
    <cofactor evidence="1">
        <name>Mn(2+)</name>
        <dbReference type="ChEBI" id="CHEBI:29035"/>
    </cofactor>
    <cofactor evidence="1">
        <name>Fe(2+)</name>
        <dbReference type="ChEBI" id="CHEBI:29033"/>
    </cofactor>
    <text evidence="1">Binds 2 divalent metal cations per subunit. Has a high-affinity and a low affinity metal-binding site. The true nature of the physiological cofactor is under debate. The enzyme is active with cobalt, zinc, manganese or divalent iron ions. Most likely, methionine aminopeptidases function as mononuclear Fe(2+)-metalloproteases under physiological conditions, and the catalytically relevant metal-binding site has been assigned to the histidine-containing high-affinity site.</text>
</comment>
<comment type="subunit">
    <text evidence="1">Monomer.</text>
</comment>
<comment type="similarity">
    <text evidence="1">Belongs to the peptidase M24A family. Methionine aminopeptidase archaeal type 2 subfamily.</text>
</comment>
<proteinExistence type="inferred from homology"/>